<sequence>MIWHVQNENFILDSTRIFMKAFHLLLFNGSFIFPECILIFGLILLLMIDSTSDQKDRPWFYFISSTSLVMSITALLFRWKEEPIISFSGNFQTNNFNEIFQFLILLCSTLCIPLSVEYIECTEMAITEFLLFVLTATLGGMFLCGANDLITIFVAPECFSLCSYLLSGYTKRDVRSNEATTKYLLMGGASSSILVHGFSWLYGSSGGEIELQEIVNGLINTQMYNSPGISIALISITVGIGFKLSPAPFHQWTPDVYEGSPTPVVAFLSVTSKVAASASATRIFDIPFYFSSNEWHLLLEILAILSMILGNLIAITQTSMKRMLAYSSIGQIGYVIIGIIVGDSNNGYASMITYMLFYISMNLGTFARIVSFGLRTGTDNIRDYAGLYTKDPFLALSSALCLLSLGGLPPLAGFFGKLHLFWCGWQAGLYFLVSIGLLTSVVSIYYYLKIIKLLMTGRNQEITPHVRNYRRSPLRSNNSIEWSMTVCVIASTIPGISMNPILAIAQDTLF</sequence>
<name>NU2C_ALLTE</name>
<keyword id="KW-0150">Chloroplast</keyword>
<keyword id="KW-0472">Membrane</keyword>
<keyword id="KW-0520">NAD</keyword>
<keyword id="KW-0521">NADP</keyword>
<keyword id="KW-0934">Plastid</keyword>
<keyword id="KW-0618">Plastoquinone</keyword>
<keyword id="KW-0874">Quinone</keyword>
<keyword id="KW-0793">Thylakoid</keyword>
<keyword id="KW-1278">Translocase</keyword>
<keyword id="KW-0812">Transmembrane</keyword>
<keyword id="KW-1133">Transmembrane helix</keyword>
<keyword id="KW-0813">Transport</keyword>
<reference key="1">
    <citation type="submission" date="2002-09" db="EMBL/GenBank/DDBJ databases">
        <title>Phylogenetic relationships among the major lineages of Asparagales based on a large chloroplast data set.</title>
        <authorList>
            <person name="McPherson M.A."/>
            <person name="Rai H.S."/>
            <person name="Wong W.A."/>
            <person name="Graham S.W."/>
        </authorList>
    </citation>
    <scope>NUCLEOTIDE SEQUENCE [GENOMIC DNA]</scope>
</reference>
<feature type="chain" id="PRO_0000117651" description="NAD(P)H-quinone oxidoreductase subunit 2, chloroplastic">
    <location>
        <begin position="1"/>
        <end position="510"/>
    </location>
</feature>
<feature type="transmembrane region" description="Helical" evidence="1">
    <location>
        <begin position="24"/>
        <end position="44"/>
    </location>
</feature>
<feature type="transmembrane region" description="Helical" evidence="1">
    <location>
        <begin position="59"/>
        <end position="79"/>
    </location>
</feature>
<feature type="transmembrane region" description="Helical" evidence="1">
    <location>
        <begin position="99"/>
        <end position="119"/>
    </location>
</feature>
<feature type="transmembrane region" description="Helical" evidence="1">
    <location>
        <begin position="124"/>
        <end position="144"/>
    </location>
</feature>
<feature type="transmembrane region" description="Helical" evidence="1">
    <location>
        <begin position="149"/>
        <end position="169"/>
    </location>
</feature>
<feature type="transmembrane region" description="Helical" evidence="1">
    <location>
        <begin position="183"/>
        <end position="203"/>
    </location>
</feature>
<feature type="transmembrane region" description="Helical" evidence="1">
    <location>
        <begin position="229"/>
        <end position="249"/>
    </location>
</feature>
<feature type="transmembrane region" description="Helical" evidence="1">
    <location>
        <begin position="295"/>
        <end position="315"/>
    </location>
</feature>
<feature type="transmembrane region" description="Helical" evidence="1">
    <location>
        <begin position="323"/>
        <end position="343"/>
    </location>
</feature>
<feature type="transmembrane region" description="Helical" evidence="1">
    <location>
        <begin position="347"/>
        <end position="367"/>
    </location>
</feature>
<feature type="transmembrane region" description="Helical" evidence="1">
    <location>
        <begin position="395"/>
        <end position="415"/>
    </location>
</feature>
<feature type="transmembrane region" description="Helical" evidence="1">
    <location>
        <begin position="418"/>
        <end position="438"/>
    </location>
</feature>
<organism>
    <name type="scientific">Allium textile</name>
    <name type="common">Textile onion</name>
    <name type="synonym">Allium reticulatum</name>
    <dbReference type="NCBI Taxonomy" id="207935"/>
    <lineage>
        <taxon>Eukaryota</taxon>
        <taxon>Viridiplantae</taxon>
        <taxon>Streptophyta</taxon>
        <taxon>Embryophyta</taxon>
        <taxon>Tracheophyta</taxon>
        <taxon>Spermatophyta</taxon>
        <taxon>Magnoliopsida</taxon>
        <taxon>Liliopsida</taxon>
        <taxon>Asparagales</taxon>
        <taxon>Amaryllidaceae</taxon>
        <taxon>Allioideae</taxon>
        <taxon>Allieae</taxon>
        <taxon>Allium</taxon>
    </lineage>
</organism>
<dbReference type="EC" id="7.1.1.-" evidence="1"/>
<dbReference type="EMBL" id="AY147489">
    <property type="protein sequence ID" value="AAN32073.1"/>
    <property type="status" value="ALT_INIT"/>
    <property type="molecule type" value="Genomic_DNA"/>
</dbReference>
<dbReference type="SMR" id="Q67ID0"/>
<dbReference type="GO" id="GO:0009535">
    <property type="term" value="C:chloroplast thylakoid membrane"/>
    <property type="evidence" value="ECO:0007669"/>
    <property type="project" value="UniProtKB-SubCell"/>
</dbReference>
<dbReference type="GO" id="GO:0008137">
    <property type="term" value="F:NADH dehydrogenase (ubiquinone) activity"/>
    <property type="evidence" value="ECO:0007669"/>
    <property type="project" value="InterPro"/>
</dbReference>
<dbReference type="GO" id="GO:0048038">
    <property type="term" value="F:quinone binding"/>
    <property type="evidence" value="ECO:0007669"/>
    <property type="project" value="UniProtKB-KW"/>
</dbReference>
<dbReference type="GO" id="GO:0042773">
    <property type="term" value="P:ATP synthesis coupled electron transport"/>
    <property type="evidence" value="ECO:0007669"/>
    <property type="project" value="InterPro"/>
</dbReference>
<dbReference type="GO" id="GO:0019684">
    <property type="term" value="P:photosynthesis, light reaction"/>
    <property type="evidence" value="ECO:0007669"/>
    <property type="project" value="UniProtKB-UniRule"/>
</dbReference>
<dbReference type="HAMAP" id="MF_00445">
    <property type="entry name" value="NDH1_NuoN_1"/>
    <property type="match status" value="1"/>
</dbReference>
<dbReference type="InterPro" id="IPR010096">
    <property type="entry name" value="NADH-Q_OxRdtase_suN/2"/>
</dbReference>
<dbReference type="InterPro" id="IPR001750">
    <property type="entry name" value="ND/Mrp_TM"/>
</dbReference>
<dbReference type="InterPro" id="IPR045693">
    <property type="entry name" value="Ndh2_N"/>
</dbReference>
<dbReference type="NCBIfam" id="TIGR01770">
    <property type="entry name" value="NDH_I_N"/>
    <property type="match status" value="1"/>
</dbReference>
<dbReference type="NCBIfam" id="NF002701">
    <property type="entry name" value="PRK02504.1"/>
    <property type="match status" value="1"/>
</dbReference>
<dbReference type="PANTHER" id="PTHR22773">
    <property type="entry name" value="NADH DEHYDROGENASE"/>
    <property type="match status" value="1"/>
</dbReference>
<dbReference type="Pfam" id="PF19530">
    <property type="entry name" value="Ndh2_N"/>
    <property type="match status" value="1"/>
</dbReference>
<dbReference type="Pfam" id="PF00361">
    <property type="entry name" value="Proton_antipo_M"/>
    <property type="match status" value="1"/>
</dbReference>
<dbReference type="PRINTS" id="PR01434">
    <property type="entry name" value="NADHDHGNASE5"/>
</dbReference>
<protein>
    <recommendedName>
        <fullName evidence="1">NAD(P)H-quinone oxidoreductase subunit 2, chloroplastic</fullName>
        <ecNumber evidence="1">7.1.1.-</ecNumber>
    </recommendedName>
    <alternativeName>
        <fullName evidence="1">NAD(P)H dehydrogenase, subunit 2</fullName>
    </alternativeName>
    <alternativeName>
        <fullName evidence="1">NADH-plastoquinone oxidoreductase subunit 2</fullName>
    </alternativeName>
</protein>
<proteinExistence type="inferred from homology"/>
<accession>Q67ID0</accession>
<evidence type="ECO:0000255" key="1">
    <source>
        <dbReference type="HAMAP-Rule" id="MF_00445"/>
    </source>
</evidence>
<evidence type="ECO:0000305" key="2"/>
<gene>
    <name evidence="1" type="primary">ndhB</name>
</gene>
<geneLocation type="chloroplast"/>
<comment type="function">
    <text evidence="1">NDH shuttles electrons from NAD(P)H:plastoquinone, via FMN and iron-sulfur (Fe-S) centers, to quinones in the photosynthetic chain and possibly in a chloroplast respiratory chain. The immediate electron acceptor for the enzyme in this species is believed to be plastoquinone. Couples the redox reaction to proton translocation, and thus conserves the redox energy in a proton gradient.</text>
</comment>
<comment type="catalytic activity">
    <reaction evidence="1">
        <text>a plastoquinone + NADH + (n+1) H(+)(in) = a plastoquinol + NAD(+) + n H(+)(out)</text>
        <dbReference type="Rhea" id="RHEA:42608"/>
        <dbReference type="Rhea" id="RHEA-COMP:9561"/>
        <dbReference type="Rhea" id="RHEA-COMP:9562"/>
        <dbReference type="ChEBI" id="CHEBI:15378"/>
        <dbReference type="ChEBI" id="CHEBI:17757"/>
        <dbReference type="ChEBI" id="CHEBI:57540"/>
        <dbReference type="ChEBI" id="CHEBI:57945"/>
        <dbReference type="ChEBI" id="CHEBI:62192"/>
    </reaction>
</comment>
<comment type="catalytic activity">
    <reaction evidence="1">
        <text>a plastoquinone + NADPH + (n+1) H(+)(in) = a plastoquinol + NADP(+) + n H(+)(out)</text>
        <dbReference type="Rhea" id="RHEA:42612"/>
        <dbReference type="Rhea" id="RHEA-COMP:9561"/>
        <dbReference type="Rhea" id="RHEA-COMP:9562"/>
        <dbReference type="ChEBI" id="CHEBI:15378"/>
        <dbReference type="ChEBI" id="CHEBI:17757"/>
        <dbReference type="ChEBI" id="CHEBI:57783"/>
        <dbReference type="ChEBI" id="CHEBI:58349"/>
        <dbReference type="ChEBI" id="CHEBI:62192"/>
    </reaction>
</comment>
<comment type="subunit">
    <text evidence="1">NDH is composed of at least 16 different subunits, 5 of which are encoded in the nucleus.</text>
</comment>
<comment type="subcellular location">
    <subcellularLocation>
        <location evidence="1">Plastid</location>
        <location evidence="1">Chloroplast thylakoid membrane</location>
        <topology evidence="1">Multi-pass membrane protein</topology>
    </subcellularLocation>
</comment>
<comment type="similarity">
    <text evidence="1">Belongs to the complex I subunit 2 family.</text>
</comment>
<comment type="sequence caution" evidence="2">
    <conflict type="erroneous initiation">
        <sequence resource="EMBL-CDS" id="AAN32073"/>
    </conflict>
</comment>